<dbReference type="EMBL" id="CP000682">
    <property type="protein sequence ID" value="ABP95902.1"/>
    <property type="molecule type" value="Genomic_DNA"/>
</dbReference>
<dbReference type="RefSeq" id="WP_012021689.1">
    <property type="nucleotide sequence ID" value="NZ_CP139956.1"/>
</dbReference>
<dbReference type="SMR" id="A4YHK0"/>
<dbReference type="STRING" id="399549.Msed_1747"/>
<dbReference type="GeneID" id="97613142"/>
<dbReference type="KEGG" id="mse:Msed_1747"/>
<dbReference type="eggNOG" id="arCOG01753">
    <property type="taxonomic scope" value="Archaea"/>
</dbReference>
<dbReference type="HOGENOM" id="CLU_110989_1_0_2"/>
<dbReference type="Proteomes" id="UP000000242">
    <property type="component" value="Chromosome"/>
</dbReference>
<dbReference type="GO" id="GO:0005694">
    <property type="term" value="C:chromosome"/>
    <property type="evidence" value="ECO:0007669"/>
    <property type="project" value="UniProtKB-SubCell"/>
</dbReference>
<dbReference type="GO" id="GO:0005737">
    <property type="term" value="C:cytoplasm"/>
    <property type="evidence" value="ECO:0007669"/>
    <property type="project" value="UniProtKB-SubCell"/>
</dbReference>
<dbReference type="GO" id="GO:0003690">
    <property type="term" value="F:double-stranded DNA binding"/>
    <property type="evidence" value="ECO:0007669"/>
    <property type="project" value="UniProtKB-UniRule"/>
</dbReference>
<dbReference type="GO" id="GO:0003723">
    <property type="term" value="F:RNA binding"/>
    <property type="evidence" value="ECO:0007669"/>
    <property type="project" value="InterPro"/>
</dbReference>
<dbReference type="GO" id="GO:0030261">
    <property type="term" value="P:chromosome condensation"/>
    <property type="evidence" value="ECO:0007669"/>
    <property type="project" value="UniProtKB-KW"/>
</dbReference>
<dbReference type="Gene3D" id="3.30.110.20">
    <property type="entry name" value="Alba-like domain"/>
    <property type="match status" value="1"/>
</dbReference>
<dbReference type="HAMAP" id="MF_01122">
    <property type="entry name" value="AlbA"/>
    <property type="match status" value="1"/>
</dbReference>
<dbReference type="InterPro" id="IPR036882">
    <property type="entry name" value="Alba-like_dom_sf"/>
</dbReference>
<dbReference type="InterPro" id="IPR013795">
    <property type="entry name" value="DNA/RNA-bd_Alba"/>
</dbReference>
<dbReference type="InterPro" id="IPR002775">
    <property type="entry name" value="DNA/RNA-bd_Alba-like"/>
</dbReference>
<dbReference type="NCBIfam" id="TIGR00285">
    <property type="entry name" value="DNA-binding protein Alba"/>
    <property type="match status" value="1"/>
</dbReference>
<dbReference type="NCBIfam" id="NF003088">
    <property type="entry name" value="PRK04015.1"/>
    <property type="match status" value="1"/>
</dbReference>
<dbReference type="Pfam" id="PF01918">
    <property type="entry name" value="Alba"/>
    <property type="match status" value="1"/>
</dbReference>
<dbReference type="PIRSF" id="PIRSF028732">
    <property type="entry name" value="Alba"/>
    <property type="match status" value="1"/>
</dbReference>
<dbReference type="SUPFAM" id="SSF82704">
    <property type="entry name" value="AlbA-like"/>
    <property type="match status" value="1"/>
</dbReference>
<proteinExistence type="inferred from homology"/>
<keyword id="KW-0007">Acetylation</keyword>
<keyword id="KW-0158">Chromosome</keyword>
<keyword id="KW-0963">Cytoplasm</keyword>
<keyword id="KW-0226">DNA condensation</keyword>
<keyword id="KW-0238">DNA-binding</keyword>
<keyword id="KW-1185">Reference proteome</keyword>
<protein>
    <recommendedName>
        <fullName evidence="1">DNA/RNA-binding protein Alba</fullName>
    </recommendedName>
</protein>
<sequence>MSGTSPTPSNVVLVGKKPVMNYVLAALTLLNQGVPEIIIKARGRAISKAVDTVEIVRNRFLPDKIEIRAIGVGSQVVTSQDGRQSRVSTIEISIKKKA</sequence>
<feature type="chain" id="PRO_1000073039" description="DNA/RNA-binding protein Alba">
    <location>
        <begin position="1"/>
        <end position="98"/>
    </location>
</feature>
<feature type="modified residue" description="N6-acetyllysine" evidence="1">
    <location>
        <position position="16"/>
    </location>
</feature>
<organism>
    <name type="scientific">Metallosphaera sedula (strain ATCC 51363 / DSM 5348 / JCM 9185 / NBRC 15509 / TH2)</name>
    <dbReference type="NCBI Taxonomy" id="399549"/>
    <lineage>
        <taxon>Archaea</taxon>
        <taxon>Thermoproteota</taxon>
        <taxon>Thermoprotei</taxon>
        <taxon>Sulfolobales</taxon>
        <taxon>Sulfolobaceae</taxon>
        <taxon>Metallosphaera</taxon>
    </lineage>
</organism>
<reference key="1">
    <citation type="journal article" date="2008" name="Appl. Environ. Microbiol.">
        <title>The genome sequence of the metal-mobilizing, extremely thermoacidophilic archaeon Metallosphaera sedula provides insights into bioleaching-associated metabolism.</title>
        <authorList>
            <person name="Auernik K.S."/>
            <person name="Maezato Y."/>
            <person name="Blum P.H."/>
            <person name="Kelly R.M."/>
        </authorList>
    </citation>
    <scope>NUCLEOTIDE SEQUENCE [LARGE SCALE GENOMIC DNA]</scope>
    <source>
        <strain>ATCC 51363 / DSM 5348 / JCM 9185 / NBRC 15509 / TH2</strain>
    </source>
</reference>
<accession>A4YHK0</accession>
<name>ALBA_METS5</name>
<evidence type="ECO:0000255" key="1">
    <source>
        <dbReference type="HAMAP-Rule" id="MF_01122"/>
    </source>
</evidence>
<comment type="function">
    <text evidence="1">Binds double-stranded DNA tightly but without sequence specificity. Involved in DNA compaction.</text>
</comment>
<comment type="subcellular location">
    <subcellularLocation>
        <location evidence="1">Cytoplasm</location>
    </subcellularLocation>
    <subcellularLocation>
        <location evidence="1">Chromosome</location>
    </subcellularLocation>
</comment>
<comment type="PTM">
    <text evidence="1">Acetylated. Acetylation at Lys-16 decreases DNA-binding affinity.</text>
</comment>
<comment type="similarity">
    <text evidence="1">Belongs to the histone-like Alba family.</text>
</comment>
<gene>
    <name evidence="1" type="primary">albA</name>
    <name type="ordered locus">Msed_1747</name>
</gene>